<reference key="1">
    <citation type="journal article" date="1997" name="EMBO J.">
        <title>Disruption of the plastid ycf10 open reading frame affects uptake of inorganic carbon in the chloroplast of Chlamydomonas.</title>
        <authorList>
            <person name="Rolland N."/>
            <person name="Dorne A.-J."/>
            <person name="Amoroso G."/>
            <person name="Sueltemeyer D.F."/>
            <person name="Joyard J."/>
            <person name="Rochaix J.-D."/>
        </authorList>
    </citation>
    <scope>NUCLEOTIDE SEQUENCE [GENOMIC DNA]</scope>
    <scope>FUNCTION</scope>
    <scope>CHARACTERIZATION</scope>
    <source>
        <strain>cw15</strain>
    </source>
</reference>
<reference key="2">
    <citation type="submission" date="1995-06" db="EMBL/GenBank/DDBJ databases">
        <authorList>
            <person name="Parker J.R."/>
            <person name="Willey D.L."/>
        </authorList>
    </citation>
    <scope>NUCLEOTIDE SEQUENCE [GENOMIC DNA]</scope>
    <source>
        <strain>137c / CC-125</strain>
    </source>
</reference>
<reference key="3">
    <citation type="journal article" date="2009" name="BMC Evol. Biol.">
        <title>Nucleotide diversity of the Chlamydomonas reinhardtii plastid genome: addressing the mutational-hazard hypothesis.</title>
        <authorList>
            <person name="Smith D.R."/>
            <person name="Lee R.W."/>
        </authorList>
    </citation>
    <scope>NUCLEOTIDE SEQUENCE [LARGE SCALE GENOMIC DNA]</scope>
    <source>
        <strain>CC-503</strain>
    </source>
</reference>
<reference key="4">
    <citation type="journal article" date="2002" name="Plant Cell">
        <title>The Chlamydomonas reinhardtii plastid chromosome: islands of genes in a sea of repeats.</title>
        <authorList>
            <person name="Maul J.E."/>
            <person name="Lilly J.W."/>
            <person name="Cui L."/>
            <person name="dePamphilis C.W."/>
            <person name="Miller W."/>
            <person name="Harris E.H."/>
            <person name="Stern D.B."/>
        </authorList>
    </citation>
    <scope>IDENTIFICATION</scope>
    <scope>COMPLETE PLASTID GENOME</scope>
</reference>
<evidence type="ECO:0000255" key="1">
    <source>
        <dbReference type="HAMAP-Rule" id="MF_01308"/>
    </source>
</evidence>
<evidence type="ECO:0000269" key="2">
    <source>
    </source>
</evidence>
<evidence type="ECO:0000305" key="3"/>
<accession>Q37050</accession>
<accession>B7U1J2</accession>
<gene>
    <name evidence="1" type="primary">cemA</name>
    <name type="synonym">ycf10</name>
</gene>
<proteinExistence type="evidence at protein level"/>
<feature type="chain" id="PRO_0000216637" description="Potassium/proton antiporter CemA">
    <location>
        <begin position="1"/>
        <end position="500"/>
    </location>
</feature>
<feature type="transmembrane region" description="Helical" evidence="1">
    <location>
        <begin position="129"/>
        <end position="149"/>
    </location>
</feature>
<feature type="transmembrane region" description="Helical" evidence="1">
    <location>
        <begin position="378"/>
        <end position="398"/>
    </location>
</feature>
<feature type="transmembrane region" description="Helical" evidence="1">
    <location>
        <begin position="425"/>
        <end position="445"/>
    </location>
</feature>
<feature type="transmembrane region" description="Helical" evidence="1">
    <location>
        <begin position="461"/>
        <end position="481"/>
    </location>
</feature>
<feature type="region of interest" description="Insert">
    <location>
        <begin position="204"/>
        <end position="354"/>
    </location>
</feature>
<dbReference type="EMBL" id="X90559">
    <property type="protein sequence ID" value="CAA62148.1"/>
    <property type="molecule type" value="Genomic_DNA"/>
</dbReference>
<dbReference type="EMBL" id="X87945">
    <property type="protein sequence ID" value="CAA61197.1"/>
    <property type="molecule type" value="Genomic_DNA"/>
</dbReference>
<dbReference type="EMBL" id="FJ423446">
    <property type="protein sequence ID" value="ACJ50139.1"/>
    <property type="molecule type" value="Genomic_DNA"/>
</dbReference>
<dbReference type="EMBL" id="BK000554">
    <property type="protein sequence ID" value="DAA00953.1"/>
    <property type="molecule type" value="Genomic_DNA"/>
</dbReference>
<dbReference type="PIR" id="S57467">
    <property type="entry name" value="S57467"/>
</dbReference>
<dbReference type="RefSeq" id="NP_958408.1">
    <property type="nucleotide sequence ID" value="NC_005353.1"/>
</dbReference>
<dbReference type="SMR" id="Q37050"/>
<dbReference type="STRING" id="3055.Q37050"/>
<dbReference type="TCDB" id="9.B.73.1.1">
    <property type="family name" value="the chloroplast envelope/cyanobacterial membrane protein (cema) family"/>
</dbReference>
<dbReference type="PaxDb" id="3055-DAA00953"/>
<dbReference type="GeneID" id="2717043"/>
<dbReference type="KEGG" id="cre:ChreCp052"/>
<dbReference type="eggNOG" id="ENOG502QV51">
    <property type="taxonomic scope" value="Eukaryota"/>
</dbReference>
<dbReference type="HOGENOM" id="CLU_545585_0_0_1"/>
<dbReference type="InParanoid" id="Q37050"/>
<dbReference type="Proteomes" id="UP000006906">
    <property type="component" value="Chloroplast"/>
</dbReference>
<dbReference type="GO" id="GO:0009706">
    <property type="term" value="C:chloroplast inner membrane"/>
    <property type="evidence" value="ECO:0007669"/>
    <property type="project" value="UniProtKB-SubCell"/>
</dbReference>
<dbReference type="GO" id="GO:0015297">
    <property type="term" value="F:antiporter activity"/>
    <property type="evidence" value="ECO:0007669"/>
    <property type="project" value="UniProtKB-KW"/>
</dbReference>
<dbReference type="GO" id="GO:0015078">
    <property type="term" value="F:proton transmembrane transporter activity"/>
    <property type="evidence" value="ECO:0007669"/>
    <property type="project" value="UniProtKB-UniRule"/>
</dbReference>
<dbReference type="GO" id="GO:0006813">
    <property type="term" value="P:potassium ion transport"/>
    <property type="evidence" value="ECO:0007669"/>
    <property type="project" value="UniProtKB-UniRule"/>
</dbReference>
<dbReference type="HAMAP" id="MF_01308">
    <property type="entry name" value="CemA_PxcA"/>
    <property type="match status" value="1"/>
</dbReference>
<dbReference type="InterPro" id="IPR004282">
    <property type="entry name" value="CemA"/>
</dbReference>
<dbReference type="PANTHER" id="PTHR33650:SF2">
    <property type="entry name" value="CHLOROPLAST ENVELOPE MEMBRANE PROTEIN"/>
    <property type="match status" value="1"/>
</dbReference>
<dbReference type="PANTHER" id="PTHR33650">
    <property type="entry name" value="CHLOROPLAST ENVELOPE MEMBRANE PROTEIN-RELATED"/>
    <property type="match status" value="1"/>
</dbReference>
<dbReference type="Pfam" id="PF03040">
    <property type="entry name" value="CemA"/>
    <property type="match status" value="2"/>
</dbReference>
<name>CEMA_CHLRE</name>
<protein>
    <recommendedName>
        <fullName evidence="1">Potassium/proton antiporter CemA</fullName>
    </recommendedName>
    <alternativeName>
        <fullName evidence="1">Chloroplast envelope membrane protein A</fullName>
        <shortName evidence="1">CemA</shortName>
    </alternativeName>
</protein>
<comment type="function">
    <text evidence="1 2">Contributes to K(+)/H(+) antiport activity by supporting proton efflux to control proton extrusion and homeostasis in chloroplasts in a light-dependent manner to modulate photosynthesis. Prevents excessive induction of non-photochemical quenching (NPQ) under continuous-light conditions. Indirectly promotes efficient inorganic carbon uptake into chloroplasts (PubMed:9362486).</text>
</comment>
<comment type="catalytic activity">
    <reaction evidence="1">
        <text>K(+)(in) + H(+)(out) = K(+)(out) + H(+)(in)</text>
        <dbReference type="Rhea" id="RHEA:29467"/>
        <dbReference type="ChEBI" id="CHEBI:15378"/>
        <dbReference type="ChEBI" id="CHEBI:29103"/>
    </reaction>
</comment>
<comment type="subcellular location">
    <subcellularLocation>
        <location evidence="1">Plastid</location>
        <location evidence="1">Chloroplast inner membrane</location>
        <topology evidence="1">Multi-pass membrane protein</topology>
    </subcellularLocation>
</comment>
<comment type="similarity">
    <text evidence="1 3">Belongs to the CemA family.</text>
</comment>
<geneLocation type="chloroplast"/>
<keyword id="KW-0050">Antiport</keyword>
<keyword id="KW-0150">Chloroplast</keyword>
<keyword id="KW-0375">Hydrogen ion transport</keyword>
<keyword id="KW-0406">Ion transport</keyword>
<keyword id="KW-0472">Membrane</keyword>
<keyword id="KW-0934">Plastid</keyword>
<keyword id="KW-1001">Plastid inner membrane</keyword>
<keyword id="KW-0630">Potassium</keyword>
<keyword id="KW-0633">Potassium transport</keyword>
<keyword id="KW-1185">Reference proteome</keyword>
<keyword id="KW-0812">Transmembrane</keyword>
<keyword id="KW-1133">Transmembrane helix</keyword>
<keyword id="KW-0813">Transport</keyword>
<sequence length="500" mass="57855">MYTFIYFKNPKHFNLSQPSRCTAQPFISTRNRPLSCPIPTVQPIYVTHGIILPILKGTLISQRGVNIVPFVSKRDSSYYTDKDKVVSITYEEIGLFPRSFSRVLDRFLKQLFSDVDNLVIQEYRFYRYLFLTTIKTIFILFFVPFLVNFAAKNYIVKPITEYFWNTSHPEIFLNSYEQKRAFVELAKFEEKIYFETLVESHSHHQTHRDSKPLRENGIYFPDGEFLDNANLLSTPRSINSNTFLKQNIDISLREEKPLTLVQGVNLLEEKKELNIPLAQENIAYNNQSIPQTSFGQGNFSSLFTGDREGEETAKQNLLSQRVIGANLRQIYLPSAEGEMLPSIRGSLDSIKNKDISKIYQEKTIELATYYNNHSIEAITNFFADLLSLFTLLYLLITLEIQINITKSFLLEVFFGLDDSKKSLLILLITDLLVGYHSSNLWELFFEFIFNHYGIPESQTGIFLLVATLPVLLDVLFKYLIFRHLNRSSPATVATYQAIIE</sequence>
<organism>
    <name type="scientific">Chlamydomonas reinhardtii</name>
    <name type="common">Chlamydomonas smithii</name>
    <dbReference type="NCBI Taxonomy" id="3055"/>
    <lineage>
        <taxon>Eukaryota</taxon>
        <taxon>Viridiplantae</taxon>
        <taxon>Chlorophyta</taxon>
        <taxon>core chlorophytes</taxon>
        <taxon>Chlorophyceae</taxon>
        <taxon>CS clade</taxon>
        <taxon>Chlamydomonadales</taxon>
        <taxon>Chlamydomonadaceae</taxon>
        <taxon>Chlamydomonas</taxon>
    </lineage>
</organism>